<name>RL10E_THEON</name>
<keyword id="KW-0687">Ribonucleoprotein</keyword>
<keyword id="KW-0689">Ribosomal protein</keyword>
<accession>B6YSL0</accession>
<evidence type="ECO:0000255" key="1">
    <source>
        <dbReference type="HAMAP-Rule" id="MF_00448"/>
    </source>
</evidence>
<evidence type="ECO:0000305" key="2"/>
<proteinExistence type="inferred from homology"/>
<feature type="chain" id="PRO_1000193768" description="Large ribosomal subunit protein uL16">
    <location>
        <begin position="1"/>
        <end position="182"/>
    </location>
</feature>
<protein>
    <recommendedName>
        <fullName evidence="1">Large ribosomal subunit protein uL16</fullName>
    </recommendedName>
    <alternativeName>
        <fullName evidence="2">50S ribosomal protein L10e</fullName>
    </alternativeName>
</protein>
<organism>
    <name type="scientific">Thermococcus onnurineus (strain NA1)</name>
    <dbReference type="NCBI Taxonomy" id="523850"/>
    <lineage>
        <taxon>Archaea</taxon>
        <taxon>Methanobacteriati</taxon>
        <taxon>Methanobacteriota</taxon>
        <taxon>Thermococci</taxon>
        <taxon>Thermococcales</taxon>
        <taxon>Thermococcaceae</taxon>
        <taxon>Thermococcus</taxon>
    </lineage>
</organism>
<sequence length="182" mass="21128">MGLRPAKIDRDVDKPAYTRREYIRGAPGPKITIFDMGNLSAEFQYEVSLHAEQAMQIRQNALEAIRIQVNRYLQKNVGRSNYHFKIRVYPFQVLRENPMATGRKADRYGNGMRRPFGKPIGLAARVKKDQKILTVWVNEGHLKFALEAMRRAAMKLPYSAYYRIYDKEGNDITSKVLSTMKR</sequence>
<reference key="1">
    <citation type="journal article" date="2008" name="J. Bacteriol.">
        <title>The complete genome sequence of Thermococcus onnurineus NA1 reveals a mixed heterotrophic and carboxydotrophic metabolism.</title>
        <authorList>
            <person name="Lee H.S."/>
            <person name="Kang S.G."/>
            <person name="Bae S.S."/>
            <person name="Lim J.K."/>
            <person name="Cho Y."/>
            <person name="Kim Y.J."/>
            <person name="Jeon J.H."/>
            <person name="Cha S.-S."/>
            <person name="Kwon K.K."/>
            <person name="Kim H.-T."/>
            <person name="Park C.-J."/>
            <person name="Lee H.-W."/>
            <person name="Kim S.I."/>
            <person name="Chun J."/>
            <person name="Colwell R.R."/>
            <person name="Kim S.-J."/>
            <person name="Lee J.-H."/>
        </authorList>
    </citation>
    <scope>NUCLEOTIDE SEQUENCE [LARGE SCALE GENOMIC DNA]</scope>
    <source>
        <strain>NA1</strain>
    </source>
</reference>
<comment type="similarity">
    <text evidence="1">Belongs to the universal ribosomal protein uL16 family.</text>
</comment>
<dbReference type="EMBL" id="CP000855">
    <property type="protein sequence ID" value="ACJ15547.1"/>
    <property type="molecule type" value="Genomic_DNA"/>
</dbReference>
<dbReference type="RefSeq" id="WP_012571020.1">
    <property type="nucleotide sequence ID" value="NC_011529.1"/>
</dbReference>
<dbReference type="SMR" id="B6YSL0"/>
<dbReference type="STRING" id="523850.TON_0063"/>
<dbReference type="GeneID" id="7017709"/>
<dbReference type="KEGG" id="ton:TON_0063"/>
<dbReference type="PATRIC" id="fig|523850.10.peg.63"/>
<dbReference type="eggNOG" id="arCOG04113">
    <property type="taxonomic scope" value="Archaea"/>
</dbReference>
<dbReference type="HOGENOM" id="CLU_084051_0_2_2"/>
<dbReference type="OrthoDB" id="30538at2157"/>
<dbReference type="Proteomes" id="UP000002727">
    <property type="component" value="Chromosome"/>
</dbReference>
<dbReference type="GO" id="GO:1990904">
    <property type="term" value="C:ribonucleoprotein complex"/>
    <property type="evidence" value="ECO:0007669"/>
    <property type="project" value="UniProtKB-KW"/>
</dbReference>
<dbReference type="GO" id="GO:0005840">
    <property type="term" value="C:ribosome"/>
    <property type="evidence" value="ECO:0007669"/>
    <property type="project" value="UniProtKB-KW"/>
</dbReference>
<dbReference type="GO" id="GO:0003735">
    <property type="term" value="F:structural constituent of ribosome"/>
    <property type="evidence" value="ECO:0007669"/>
    <property type="project" value="InterPro"/>
</dbReference>
<dbReference type="GO" id="GO:0006412">
    <property type="term" value="P:translation"/>
    <property type="evidence" value="ECO:0007669"/>
    <property type="project" value="UniProtKB-UniRule"/>
</dbReference>
<dbReference type="CDD" id="cd01433">
    <property type="entry name" value="Ribosomal_L16_L10e"/>
    <property type="match status" value="1"/>
</dbReference>
<dbReference type="FunFam" id="3.90.1170.10:FF:000008">
    <property type="entry name" value="50S ribosomal protein L10e"/>
    <property type="match status" value="1"/>
</dbReference>
<dbReference type="Gene3D" id="3.90.1170.10">
    <property type="entry name" value="Ribosomal protein L10e/L16"/>
    <property type="match status" value="1"/>
</dbReference>
<dbReference type="HAMAP" id="MF_00448">
    <property type="entry name" value="Ribosomal_uL16_arch"/>
    <property type="match status" value="1"/>
</dbReference>
<dbReference type="InterPro" id="IPR047873">
    <property type="entry name" value="Ribosomal_uL16"/>
</dbReference>
<dbReference type="InterPro" id="IPR022981">
    <property type="entry name" value="Ribosomal_uL16_arc"/>
</dbReference>
<dbReference type="InterPro" id="IPR018255">
    <property type="entry name" value="Ribosomal_uL16_CS_euk_arc"/>
</dbReference>
<dbReference type="InterPro" id="IPR016180">
    <property type="entry name" value="Ribosomal_uL16_dom"/>
</dbReference>
<dbReference type="InterPro" id="IPR001197">
    <property type="entry name" value="Ribosomal_uL16_euk_arch"/>
</dbReference>
<dbReference type="InterPro" id="IPR036920">
    <property type="entry name" value="Ribosomal_uL16_sf"/>
</dbReference>
<dbReference type="NCBIfam" id="NF003237">
    <property type="entry name" value="PRK04199.1-2"/>
    <property type="match status" value="1"/>
</dbReference>
<dbReference type="NCBIfam" id="NF003239">
    <property type="entry name" value="PRK04199.1-4"/>
    <property type="match status" value="1"/>
</dbReference>
<dbReference type="PANTHER" id="PTHR11726">
    <property type="entry name" value="60S RIBOSOMAL PROTEIN L10"/>
    <property type="match status" value="1"/>
</dbReference>
<dbReference type="Pfam" id="PF00252">
    <property type="entry name" value="Ribosomal_L16"/>
    <property type="match status" value="1"/>
</dbReference>
<dbReference type="PIRSF" id="PIRSF005590">
    <property type="entry name" value="Ribosomal_L10"/>
    <property type="match status" value="1"/>
</dbReference>
<dbReference type="SUPFAM" id="SSF54686">
    <property type="entry name" value="Ribosomal protein L16p/L10e"/>
    <property type="match status" value="1"/>
</dbReference>
<dbReference type="PROSITE" id="PS01257">
    <property type="entry name" value="RIBOSOMAL_L10E"/>
    <property type="match status" value="1"/>
</dbReference>
<gene>
    <name evidence="1" type="primary">rpl10e</name>
    <name type="ordered locus">TON_0063</name>
</gene>